<protein>
    <recommendedName>
        <fullName evidence="1">Putative pre-16S rRNA nuclease</fullName>
        <ecNumber evidence="1">3.1.-.-</ecNumber>
    </recommendedName>
</protein>
<sequence length="137" mass="15367">MRILGLDVGTKTVGVAISDEMGWTAQGLETIKINEEREIFGFDRVSELVKQYNVDKIVVGLPKNMNGTIGPRGEACQRYAESLRELLQLEVILWDERLSTMAAERLLISADVSRKKRKQVVDKMAAVVILQGYLDSK</sequence>
<dbReference type="EC" id="3.1.-.-" evidence="1"/>
<dbReference type="EMBL" id="CP000764">
    <property type="protein sequence ID" value="ABS23323.1"/>
    <property type="molecule type" value="Genomic_DNA"/>
</dbReference>
<dbReference type="SMR" id="A7GT65"/>
<dbReference type="STRING" id="315749.Bcer98_3099"/>
<dbReference type="GeneID" id="33898346"/>
<dbReference type="KEGG" id="bcy:Bcer98_3099"/>
<dbReference type="eggNOG" id="COG0816">
    <property type="taxonomic scope" value="Bacteria"/>
</dbReference>
<dbReference type="HOGENOM" id="CLU_098240_2_0_9"/>
<dbReference type="OrthoDB" id="9796140at2"/>
<dbReference type="Proteomes" id="UP000002300">
    <property type="component" value="Chromosome"/>
</dbReference>
<dbReference type="GO" id="GO:0005829">
    <property type="term" value="C:cytosol"/>
    <property type="evidence" value="ECO:0007669"/>
    <property type="project" value="TreeGrafter"/>
</dbReference>
<dbReference type="GO" id="GO:0004518">
    <property type="term" value="F:nuclease activity"/>
    <property type="evidence" value="ECO:0007669"/>
    <property type="project" value="UniProtKB-KW"/>
</dbReference>
<dbReference type="GO" id="GO:0000967">
    <property type="term" value="P:rRNA 5'-end processing"/>
    <property type="evidence" value="ECO:0007669"/>
    <property type="project" value="UniProtKB-UniRule"/>
</dbReference>
<dbReference type="CDD" id="cd16964">
    <property type="entry name" value="YqgF"/>
    <property type="match status" value="1"/>
</dbReference>
<dbReference type="FunFam" id="3.30.420.140:FF:000003">
    <property type="entry name" value="Putative pre-16S rRNA nuclease"/>
    <property type="match status" value="1"/>
</dbReference>
<dbReference type="Gene3D" id="3.30.420.140">
    <property type="entry name" value="YqgF/RNase H-like domain"/>
    <property type="match status" value="1"/>
</dbReference>
<dbReference type="HAMAP" id="MF_00651">
    <property type="entry name" value="Nuclease_YqgF"/>
    <property type="match status" value="1"/>
</dbReference>
<dbReference type="InterPro" id="IPR012337">
    <property type="entry name" value="RNaseH-like_sf"/>
</dbReference>
<dbReference type="InterPro" id="IPR005227">
    <property type="entry name" value="YqgF"/>
</dbReference>
<dbReference type="InterPro" id="IPR006641">
    <property type="entry name" value="YqgF/RNaseH-like_dom"/>
</dbReference>
<dbReference type="InterPro" id="IPR037027">
    <property type="entry name" value="YqgF/RNaseH-like_dom_sf"/>
</dbReference>
<dbReference type="NCBIfam" id="TIGR00250">
    <property type="entry name" value="RNAse_H_YqgF"/>
    <property type="match status" value="1"/>
</dbReference>
<dbReference type="PANTHER" id="PTHR33317">
    <property type="entry name" value="POLYNUCLEOTIDYL TRANSFERASE, RIBONUCLEASE H-LIKE SUPERFAMILY PROTEIN"/>
    <property type="match status" value="1"/>
</dbReference>
<dbReference type="PANTHER" id="PTHR33317:SF4">
    <property type="entry name" value="POLYNUCLEOTIDYL TRANSFERASE, RIBONUCLEASE H-LIKE SUPERFAMILY PROTEIN"/>
    <property type="match status" value="1"/>
</dbReference>
<dbReference type="Pfam" id="PF03652">
    <property type="entry name" value="RuvX"/>
    <property type="match status" value="1"/>
</dbReference>
<dbReference type="SMART" id="SM00732">
    <property type="entry name" value="YqgFc"/>
    <property type="match status" value="1"/>
</dbReference>
<dbReference type="SUPFAM" id="SSF53098">
    <property type="entry name" value="Ribonuclease H-like"/>
    <property type="match status" value="1"/>
</dbReference>
<keyword id="KW-0963">Cytoplasm</keyword>
<keyword id="KW-0378">Hydrolase</keyword>
<keyword id="KW-0540">Nuclease</keyword>
<keyword id="KW-0690">Ribosome biogenesis</keyword>
<feature type="chain" id="PRO_1000082733" description="Putative pre-16S rRNA nuclease">
    <location>
        <begin position="1"/>
        <end position="137"/>
    </location>
</feature>
<name>YQGF_BACCN</name>
<reference key="1">
    <citation type="journal article" date="2008" name="Chem. Biol. Interact.">
        <title>Extending the Bacillus cereus group genomics to putative food-borne pathogens of different toxicity.</title>
        <authorList>
            <person name="Lapidus A."/>
            <person name="Goltsman E."/>
            <person name="Auger S."/>
            <person name="Galleron N."/>
            <person name="Segurens B."/>
            <person name="Dossat C."/>
            <person name="Land M.L."/>
            <person name="Broussolle V."/>
            <person name="Brillard J."/>
            <person name="Guinebretiere M.-H."/>
            <person name="Sanchis V."/>
            <person name="Nguen-the C."/>
            <person name="Lereclus D."/>
            <person name="Richardson P."/>
            <person name="Wincker P."/>
            <person name="Weissenbach J."/>
            <person name="Ehrlich S.D."/>
            <person name="Sorokin A."/>
        </authorList>
    </citation>
    <scope>NUCLEOTIDE SEQUENCE [LARGE SCALE GENOMIC DNA]</scope>
    <source>
        <strain>DSM 22905 / CIP 110041 / 391-98 / NVH 391-98</strain>
    </source>
</reference>
<evidence type="ECO:0000255" key="1">
    <source>
        <dbReference type="HAMAP-Rule" id="MF_00651"/>
    </source>
</evidence>
<proteinExistence type="inferred from homology"/>
<organism>
    <name type="scientific">Bacillus cytotoxicus (strain DSM 22905 / CIP 110041 / 391-98 / NVH 391-98)</name>
    <dbReference type="NCBI Taxonomy" id="315749"/>
    <lineage>
        <taxon>Bacteria</taxon>
        <taxon>Bacillati</taxon>
        <taxon>Bacillota</taxon>
        <taxon>Bacilli</taxon>
        <taxon>Bacillales</taxon>
        <taxon>Bacillaceae</taxon>
        <taxon>Bacillus</taxon>
        <taxon>Bacillus cereus group</taxon>
    </lineage>
</organism>
<gene>
    <name type="ordered locus">Bcer98_3099</name>
</gene>
<comment type="function">
    <text evidence="1">Could be a nuclease involved in processing of the 5'-end of pre-16S rRNA.</text>
</comment>
<comment type="subcellular location">
    <subcellularLocation>
        <location evidence="1">Cytoplasm</location>
    </subcellularLocation>
</comment>
<comment type="similarity">
    <text evidence="1">Belongs to the YqgF nuclease family.</text>
</comment>
<accession>A7GT65</accession>